<name>IOVO_CROAU</name>
<accession>P67951</accession>
<accession>P05586</accession>
<comment type="subcellular location">
    <subcellularLocation>
        <location>Secreted</location>
    </subcellularLocation>
</comment>
<comment type="domain">
    <text>Avian ovomucoid consists of three homologous, tandem Kazal family inhibitory domains.</text>
</comment>
<proteinExistence type="evidence at protein level"/>
<keyword id="KW-0903">Direct protein sequencing</keyword>
<keyword id="KW-1015">Disulfide bond</keyword>
<keyword id="KW-0325">Glycoprotein</keyword>
<keyword id="KW-0646">Protease inhibitor</keyword>
<keyword id="KW-0677">Repeat</keyword>
<keyword id="KW-0964">Secreted</keyword>
<keyword id="KW-0722">Serine protease inhibitor</keyword>
<organism>
    <name type="scientific">Crossoptilon auritum</name>
    <name type="common">Blue-eared pheasant</name>
    <name type="synonym">Phasianus auritus</name>
    <dbReference type="NCBI Taxonomy" id="9096"/>
    <lineage>
        <taxon>Eukaryota</taxon>
        <taxon>Metazoa</taxon>
        <taxon>Chordata</taxon>
        <taxon>Craniata</taxon>
        <taxon>Vertebrata</taxon>
        <taxon>Euteleostomi</taxon>
        <taxon>Archelosauria</taxon>
        <taxon>Archosauria</taxon>
        <taxon>Dinosauria</taxon>
        <taxon>Saurischia</taxon>
        <taxon>Theropoda</taxon>
        <taxon>Coelurosauria</taxon>
        <taxon>Aves</taxon>
        <taxon>Neognathae</taxon>
        <taxon>Galloanserae</taxon>
        <taxon>Galliformes</taxon>
        <taxon>Phasianidae</taxon>
        <taxon>Phasianinae</taxon>
        <taxon>Crossoptilon</taxon>
    </lineage>
</organism>
<protein>
    <recommendedName>
        <fullName>Ovomucoid</fullName>
    </recommendedName>
</protein>
<reference key="1">
    <citation type="journal article" date="1987" name="Biochemistry">
        <title>Ovomucoid third domains from 100 avian species: isolation, sequences, and hypervariability of enzyme-inhibitor contact residues.</title>
        <authorList>
            <person name="Laskowski M. Jr."/>
            <person name="Kato I."/>
            <person name="Ardelt W."/>
            <person name="Cook J."/>
            <person name="Denton A."/>
            <person name="Empie M.W."/>
            <person name="Kohr W.J."/>
            <person name="Park S.J."/>
            <person name="Parks K."/>
            <person name="Schatzley B.L."/>
            <person name="Schoenberger O.L."/>
            <person name="Tashiro M."/>
            <person name="Vichot G."/>
            <person name="Whatley H.E."/>
            <person name="Wieczorek A."/>
            <person name="Wieczorek M."/>
        </authorList>
    </citation>
    <scope>PROTEIN SEQUENCE</scope>
</reference>
<evidence type="ECO:0000255" key="1">
    <source>
        <dbReference type="PROSITE-ProRule" id="PRU00798"/>
    </source>
</evidence>
<dbReference type="PIR" id="D31436">
    <property type="entry name" value="D31436"/>
</dbReference>
<dbReference type="SMR" id="P67951"/>
<dbReference type="GO" id="GO:0005615">
    <property type="term" value="C:extracellular space"/>
    <property type="evidence" value="ECO:0007669"/>
    <property type="project" value="UniProtKB-ARBA"/>
</dbReference>
<dbReference type="GO" id="GO:0004867">
    <property type="term" value="F:serine-type endopeptidase inhibitor activity"/>
    <property type="evidence" value="ECO:0007669"/>
    <property type="project" value="UniProtKB-KW"/>
</dbReference>
<dbReference type="CDD" id="cd00104">
    <property type="entry name" value="KAZAL_FS"/>
    <property type="match status" value="1"/>
</dbReference>
<dbReference type="FunFam" id="3.30.60.30:FF:000037">
    <property type="entry name" value="Ovomucoid"/>
    <property type="match status" value="1"/>
</dbReference>
<dbReference type="Gene3D" id="3.30.60.30">
    <property type="match status" value="1"/>
</dbReference>
<dbReference type="InterPro" id="IPR051597">
    <property type="entry name" value="Bifunctional_prot_inhibitor"/>
</dbReference>
<dbReference type="InterPro" id="IPR002350">
    <property type="entry name" value="Kazal_dom"/>
</dbReference>
<dbReference type="InterPro" id="IPR036058">
    <property type="entry name" value="Kazal_dom_sf"/>
</dbReference>
<dbReference type="InterPro" id="IPR001239">
    <property type="entry name" value="Prot_inh_Kazal-m"/>
</dbReference>
<dbReference type="PANTHER" id="PTHR47729:SF1">
    <property type="entry name" value="OVOMUCOID-LIKE-RELATED"/>
    <property type="match status" value="1"/>
</dbReference>
<dbReference type="PANTHER" id="PTHR47729">
    <property type="entry name" value="SERINE PEPTIDASE INHIBITOR, KAZAL TYPE 2, TANDEM DUPLICATE 1-RELATED"/>
    <property type="match status" value="1"/>
</dbReference>
<dbReference type="Pfam" id="PF00050">
    <property type="entry name" value="Kazal_1"/>
    <property type="match status" value="1"/>
</dbReference>
<dbReference type="PRINTS" id="PR00290">
    <property type="entry name" value="KAZALINHBTR"/>
</dbReference>
<dbReference type="SMART" id="SM00280">
    <property type="entry name" value="KAZAL"/>
    <property type="match status" value="1"/>
</dbReference>
<dbReference type="SUPFAM" id="SSF100895">
    <property type="entry name" value="Kazal-type serine protease inhibitors"/>
    <property type="match status" value="1"/>
</dbReference>
<dbReference type="PROSITE" id="PS00282">
    <property type="entry name" value="KAZAL_1"/>
    <property type="match status" value="1"/>
</dbReference>
<dbReference type="PROSITE" id="PS51465">
    <property type="entry name" value="KAZAL_2"/>
    <property type="match status" value="1"/>
</dbReference>
<feature type="chain" id="PRO_0000073092" description="Ovomucoid">
    <location>
        <begin position="1" status="less than"/>
        <end position="56" status="greater than"/>
    </location>
</feature>
<feature type="domain" description="Kazal-like" evidence="1">
    <location>
        <begin position="6"/>
        <end position="56"/>
    </location>
</feature>
<feature type="site" description="Reactive bond 3">
    <location>
        <begin position="18"/>
        <end position="19"/>
    </location>
</feature>
<feature type="glycosylation site" description="N-linked (GlcNAc...) asparagine">
    <location>
        <position position="45"/>
    </location>
</feature>
<feature type="disulfide bond">
    <location>
        <begin position="8"/>
        <end position="38"/>
    </location>
</feature>
<feature type="disulfide bond">
    <location>
        <begin position="16"/>
        <end position="35"/>
    </location>
</feature>
<feature type="disulfide bond">
    <location>
        <begin position="24"/>
        <end position="56"/>
    </location>
</feature>
<feature type="non-terminal residue">
    <location>
        <position position="1"/>
    </location>
</feature>
<feature type="non-terminal residue">
    <location>
        <position position="56"/>
    </location>
</feature>
<sequence>LAAVSVDCSEYPKPACTMEYRPLCGSDNKTYGNKCNFCNAVVESNGTLTLSHFGKC</sequence>